<dbReference type="EC" id="6.1.1.21" evidence="1"/>
<dbReference type="EMBL" id="CP000880">
    <property type="protein sequence ID" value="ABX20294.1"/>
    <property type="molecule type" value="Genomic_DNA"/>
</dbReference>
<dbReference type="SMR" id="A9MHL6"/>
<dbReference type="STRING" id="41514.SARI_00357"/>
<dbReference type="KEGG" id="ses:SARI_00357"/>
<dbReference type="HOGENOM" id="CLU_025113_1_1_6"/>
<dbReference type="Proteomes" id="UP000002084">
    <property type="component" value="Chromosome"/>
</dbReference>
<dbReference type="GO" id="GO:0005737">
    <property type="term" value="C:cytoplasm"/>
    <property type="evidence" value="ECO:0007669"/>
    <property type="project" value="UniProtKB-SubCell"/>
</dbReference>
<dbReference type="GO" id="GO:0005524">
    <property type="term" value="F:ATP binding"/>
    <property type="evidence" value="ECO:0007669"/>
    <property type="project" value="UniProtKB-UniRule"/>
</dbReference>
<dbReference type="GO" id="GO:0004821">
    <property type="term" value="F:histidine-tRNA ligase activity"/>
    <property type="evidence" value="ECO:0007669"/>
    <property type="project" value="UniProtKB-UniRule"/>
</dbReference>
<dbReference type="GO" id="GO:0006427">
    <property type="term" value="P:histidyl-tRNA aminoacylation"/>
    <property type="evidence" value="ECO:0007669"/>
    <property type="project" value="UniProtKB-UniRule"/>
</dbReference>
<dbReference type="CDD" id="cd00773">
    <property type="entry name" value="HisRS-like_core"/>
    <property type="match status" value="1"/>
</dbReference>
<dbReference type="CDD" id="cd00859">
    <property type="entry name" value="HisRS_anticodon"/>
    <property type="match status" value="1"/>
</dbReference>
<dbReference type="FunFam" id="3.30.930.10:FF:000005">
    <property type="entry name" value="Histidine--tRNA ligase"/>
    <property type="match status" value="1"/>
</dbReference>
<dbReference type="FunFam" id="3.40.50.800:FF:000007">
    <property type="entry name" value="Histidine--tRNA ligase"/>
    <property type="match status" value="1"/>
</dbReference>
<dbReference type="Gene3D" id="3.40.50.800">
    <property type="entry name" value="Anticodon-binding domain"/>
    <property type="match status" value="1"/>
</dbReference>
<dbReference type="Gene3D" id="3.30.930.10">
    <property type="entry name" value="Bira Bifunctional Protein, Domain 2"/>
    <property type="match status" value="1"/>
</dbReference>
<dbReference type="HAMAP" id="MF_00127">
    <property type="entry name" value="His_tRNA_synth"/>
    <property type="match status" value="1"/>
</dbReference>
<dbReference type="InterPro" id="IPR006195">
    <property type="entry name" value="aa-tRNA-synth_II"/>
</dbReference>
<dbReference type="InterPro" id="IPR045864">
    <property type="entry name" value="aa-tRNA-synth_II/BPL/LPL"/>
</dbReference>
<dbReference type="InterPro" id="IPR004154">
    <property type="entry name" value="Anticodon-bd"/>
</dbReference>
<dbReference type="InterPro" id="IPR036621">
    <property type="entry name" value="Anticodon-bd_dom_sf"/>
</dbReference>
<dbReference type="InterPro" id="IPR015807">
    <property type="entry name" value="His-tRNA-ligase"/>
</dbReference>
<dbReference type="InterPro" id="IPR041715">
    <property type="entry name" value="HisRS-like_core"/>
</dbReference>
<dbReference type="InterPro" id="IPR004516">
    <property type="entry name" value="HisRS/HisZ"/>
</dbReference>
<dbReference type="InterPro" id="IPR033656">
    <property type="entry name" value="HisRS_anticodon"/>
</dbReference>
<dbReference type="NCBIfam" id="TIGR00442">
    <property type="entry name" value="hisS"/>
    <property type="match status" value="1"/>
</dbReference>
<dbReference type="PANTHER" id="PTHR43707:SF1">
    <property type="entry name" value="HISTIDINE--TRNA LIGASE, MITOCHONDRIAL-RELATED"/>
    <property type="match status" value="1"/>
</dbReference>
<dbReference type="PANTHER" id="PTHR43707">
    <property type="entry name" value="HISTIDYL-TRNA SYNTHETASE"/>
    <property type="match status" value="1"/>
</dbReference>
<dbReference type="Pfam" id="PF03129">
    <property type="entry name" value="HGTP_anticodon"/>
    <property type="match status" value="1"/>
</dbReference>
<dbReference type="Pfam" id="PF13393">
    <property type="entry name" value="tRNA-synt_His"/>
    <property type="match status" value="1"/>
</dbReference>
<dbReference type="PIRSF" id="PIRSF001549">
    <property type="entry name" value="His-tRNA_synth"/>
    <property type="match status" value="1"/>
</dbReference>
<dbReference type="SUPFAM" id="SSF52954">
    <property type="entry name" value="Class II aaRS ABD-related"/>
    <property type="match status" value="1"/>
</dbReference>
<dbReference type="SUPFAM" id="SSF55681">
    <property type="entry name" value="Class II aaRS and biotin synthetases"/>
    <property type="match status" value="1"/>
</dbReference>
<dbReference type="PROSITE" id="PS50862">
    <property type="entry name" value="AA_TRNA_LIGASE_II"/>
    <property type="match status" value="1"/>
</dbReference>
<proteinExistence type="inferred from homology"/>
<accession>A9MHL6</accession>
<gene>
    <name evidence="1" type="primary">hisS</name>
    <name type="ordered locus">SARI_00357</name>
</gene>
<comment type="catalytic activity">
    <reaction evidence="1">
        <text>tRNA(His) + L-histidine + ATP = L-histidyl-tRNA(His) + AMP + diphosphate + H(+)</text>
        <dbReference type="Rhea" id="RHEA:17313"/>
        <dbReference type="Rhea" id="RHEA-COMP:9665"/>
        <dbReference type="Rhea" id="RHEA-COMP:9689"/>
        <dbReference type="ChEBI" id="CHEBI:15378"/>
        <dbReference type="ChEBI" id="CHEBI:30616"/>
        <dbReference type="ChEBI" id="CHEBI:33019"/>
        <dbReference type="ChEBI" id="CHEBI:57595"/>
        <dbReference type="ChEBI" id="CHEBI:78442"/>
        <dbReference type="ChEBI" id="CHEBI:78527"/>
        <dbReference type="ChEBI" id="CHEBI:456215"/>
        <dbReference type="EC" id="6.1.1.21"/>
    </reaction>
</comment>
<comment type="subunit">
    <text evidence="1">Homodimer.</text>
</comment>
<comment type="subcellular location">
    <subcellularLocation>
        <location evidence="1">Cytoplasm</location>
    </subcellularLocation>
</comment>
<comment type="similarity">
    <text evidence="1">Belongs to the class-II aminoacyl-tRNA synthetase family.</text>
</comment>
<organism>
    <name type="scientific">Salmonella arizonae (strain ATCC BAA-731 / CDC346-86 / RSK2980)</name>
    <dbReference type="NCBI Taxonomy" id="41514"/>
    <lineage>
        <taxon>Bacteria</taxon>
        <taxon>Pseudomonadati</taxon>
        <taxon>Pseudomonadota</taxon>
        <taxon>Gammaproteobacteria</taxon>
        <taxon>Enterobacterales</taxon>
        <taxon>Enterobacteriaceae</taxon>
        <taxon>Salmonella</taxon>
    </lineage>
</organism>
<feature type="chain" id="PRO_1000076283" description="Histidine--tRNA ligase">
    <location>
        <begin position="1"/>
        <end position="424"/>
    </location>
</feature>
<reference key="1">
    <citation type="submission" date="2007-11" db="EMBL/GenBank/DDBJ databases">
        <authorList>
            <consortium name="The Salmonella enterica serovar Arizonae Genome Sequencing Project"/>
            <person name="McClelland M."/>
            <person name="Sanderson E.K."/>
            <person name="Porwollik S."/>
            <person name="Spieth J."/>
            <person name="Clifton W.S."/>
            <person name="Fulton R."/>
            <person name="Chunyan W."/>
            <person name="Wollam A."/>
            <person name="Shah N."/>
            <person name="Pepin K."/>
            <person name="Bhonagiri V."/>
            <person name="Nash W."/>
            <person name="Johnson M."/>
            <person name="Thiruvilangam P."/>
            <person name="Wilson R."/>
        </authorList>
    </citation>
    <scope>NUCLEOTIDE SEQUENCE [LARGE SCALE GENOMIC DNA]</scope>
    <source>
        <strain>ATCC BAA-731 / CDC346-86 / RSK2980</strain>
    </source>
</reference>
<sequence length="424" mass="47027">MAKNIQAIRGMNDYLPGETAIWQRIESTLKNVLGSYGYSEIRLPIVEQTPLFKRAIGEVTDVVEKEMYTFEDRNGDSLTLRPEGTAGCVRAGIEHGLLYNQEQRLWYIGPMFRHERPQKGRYRQFHQLGAEVFGLQGPDIDAELIMLTARWWRALGIAEHVSLELNSIGSLEARANYRDALVAFLEQHQETLDEDCKRRMYTNPLRVLDSKNPDVQALLNDAPALGDYLDDDSREHFAGLCKLLDAAGIAYTVNQRLVRGLDYYNRTVFEWVTNSLGSQGTVCAGGRYDGLVEQLGGRATPAVGFAMGLERLVLLVQAVNPEFIASPVVDIYLVAAGTETQSAAMTLAERLRDEMPDVKLITNHGGGNFKKQFARADKWGARIALVLGESEVANGTVVVKDLRSGEQTAVAQDSVAAHLRTLLG</sequence>
<keyword id="KW-0030">Aminoacyl-tRNA synthetase</keyword>
<keyword id="KW-0067">ATP-binding</keyword>
<keyword id="KW-0963">Cytoplasm</keyword>
<keyword id="KW-0436">Ligase</keyword>
<keyword id="KW-0547">Nucleotide-binding</keyword>
<keyword id="KW-0648">Protein biosynthesis</keyword>
<keyword id="KW-1185">Reference proteome</keyword>
<evidence type="ECO:0000255" key="1">
    <source>
        <dbReference type="HAMAP-Rule" id="MF_00127"/>
    </source>
</evidence>
<protein>
    <recommendedName>
        <fullName evidence="1">Histidine--tRNA ligase</fullName>
        <ecNumber evidence="1">6.1.1.21</ecNumber>
    </recommendedName>
    <alternativeName>
        <fullName evidence="1">Histidyl-tRNA synthetase</fullName>
        <shortName evidence="1">HisRS</shortName>
    </alternativeName>
</protein>
<name>SYH_SALAR</name>